<sequence length="20" mass="2237">VYINKLTPPCGTMYYACEAV</sequence>
<accession>P83481</accession>
<protein>
    <recommendedName>
        <fullName>Antiviral protein Yp3</fullName>
    </recommendedName>
</protein>
<organism>
    <name type="scientific">Pleurotus citrinopileatus</name>
    <name type="common">Golden oyster mushroom</name>
    <dbReference type="NCBI Taxonomy" id="98342"/>
    <lineage>
        <taxon>Eukaryota</taxon>
        <taxon>Fungi</taxon>
        <taxon>Dikarya</taxon>
        <taxon>Basidiomycota</taxon>
        <taxon>Agaricomycotina</taxon>
        <taxon>Agaricomycetes</taxon>
        <taxon>Agaricomycetidae</taxon>
        <taxon>Agaricales</taxon>
        <taxon>Pleurotineae</taxon>
        <taxon>Pleurotaceae</taxon>
        <taxon>Pleurotus</taxon>
    </lineage>
</organism>
<proteinExistence type="evidence at protein level"/>
<name>APYP3_PLECI</name>
<reference key="1">
    <citation type="submission" date="2002-10" db="UniProtKB">
        <authorList>
            <person name="Wu L.-P."/>
            <person name="Fu M.-J."/>
            <person name="Wu Z.-J."/>
            <person name="Lin Q.-Y."/>
            <person name="Xie L.-H."/>
        </authorList>
    </citation>
    <scope>PROTEIN SEQUENCE</scope>
</reference>
<keyword id="KW-0930">Antiviral protein</keyword>
<keyword id="KW-0903">Direct protein sequencing</keyword>
<comment type="miscellaneous">
    <text>Has antiviral activity against Tobacco mosaic virus and antitumor activity against stomach cancer cells in vitro.</text>
</comment>
<dbReference type="GO" id="GO:0050688">
    <property type="term" value="P:regulation of defense response to virus"/>
    <property type="evidence" value="ECO:0007669"/>
    <property type="project" value="UniProtKB-KW"/>
</dbReference>
<feature type="chain" id="PRO_0000064653" description="Antiviral protein Yp3">
    <location>
        <begin position="1" status="less than"/>
        <end position="20" status="greater than"/>
    </location>
</feature>
<feature type="non-terminal residue">
    <location>
        <position position="1"/>
    </location>
</feature>
<feature type="non-terminal residue">
    <location>
        <position position="20"/>
    </location>
</feature>